<name>NEMP1_DANRE</name>
<proteinExistence type="inferred from homology"/>
<keyword id="KW-0265">Erythrocyte maturation</keyword>
<keyword id="KW-0325">Glycoprotein</keyword>
<keyword id="KW-0472">Membrane</keyword>
<keyword id="KW-0539">Nucleus</keyword>
<keyword id="KW-1185">Reference proteome</keyword>
<keyword id="KW-0732">Signal</keyword>
<keyword id="KW-0812">Transmembrane</keyword>
<keyword id="KW-1133">Transmembrane helix</keyword>
<protein>
    <recommendedName>
        <fullName evidence="10">Nuclear envelope integral membrane protein 1</fullName>
    </recommendedName>
</protein>
<reference evidence="9" key="1">
    <citation type="journal article" date="2013" name="Nature">
        <title>The zebrafish reference genome sequence and its relationship to the human genome.</title>
        <authorList>
            <person name="Howe K."/>
            <person name="Clark M.D."/>
            <person name="Torroja C.F."/>
            <person name="Torrance J."/>
            <person name="Berthelot C."/>
            <person name="Muffato M."/>
            <person name="Collins J.E."/>
            <person name="Humphray S."/>
            <person name="McLaren K."/>
            <person name="Matthews L."/>
            <person name="McLaren S."/>
            <person name="Sealy I."/>
            <person name="Caccamo M."/>
            <person name="Churcher C."/>
            <person name="Scott C."/>
            <person name="Barrett J.C."/>
            <person name="Koch R."/>
            <person name="Rauch G.J."/>
            <person name="White S."/>
            <person name="Chow W."/>
            <person name="Kilian B."/>
            <person name="Quintais L.T."/>
            <person name="Guerra-Assuncao J.A."/>
            <person name="Zhou Y."/>
            <person name="Gu Y."/>
            <person name="Yen J."/>
            <person name="Vogel J.H."/>
            <person name="Eyre T."/>
            <person name="Redmond S."/>
            <person name="Banerjee R."/>
            <person name="Chi J."/>
            <person name="Fu B."/>
            <person name="Langley E."/>
            <person name="Maguire S.F."/>
            <person name="Laird G.K."/>
            <person name="Lloyd D."/>
            <person name="Kenyon E."/>
            <person name="Donaldson S."/>
            <person name="Sehra H."/>
            <person name="Almeida-King J."/>
            <person name="Loveland J."/>
            <person name="Trevanion S."/>
            <person name="Jones M."/>
            <person name="Quail M."/>
            <person name="Willey D."/>
            <person name="Hunt A."/>
            <person name="Burton J."/>
            <person name="Sims S."/>
            <person name="McLay K."/>
            <person name="Plumb B."/>
            <person name="Davis J."/>
            <person name="Clee C."/>
            <person name="Oliver K."/>
            <person name="Clark R."/>
            <person name="Riddle C."/>
            <person name="Elliot D."/>
            <person name="Threadgold G."/>
            <person name="Harden G."/>
            <person name="Ware D."/>
            <person name="Begum S."/>
            <person name="Mortimore B."/>
            <person name="Kerry G."/>
            <person name="Heath P."/>
            <person name="Phillimore B."/>
            <person name="Tracey A."/>
            <person name="Corby N."/>
            <person name="Dunn M."/>
            <person name="Johnson C."/>
            <person name="Wood J."/>
            <person name="Clark S."/>
            <person name="Pelan S."/>
            <person name="Griffiths G."/>
            <person name="Smith M."/>
            <person name="Glithero R."/>
            <person name="Howden P."/>
            <person name="Barker N."/>
            <person name="Lloyd C."/>
            <person name="Stevens C."/>
            <person name="Harley J."/>
            <person name="Holt K."/>
            <person name="Panagiotidis G."/>
            <person name="Lovell J."/>
            <person name="Beasley H."/>
            <person name="Henderson C."/>
            <person name="Gordon D."/>
            <person name="Auger K."/>
            <person name="Wright D."/>
            <person name="Collins J."/>
            <person name="Raisen C."/>
            <person name="Dyer L."/>
            <person name="Leung K."/>
            <person name="Robertson L."/>
            <person name="Ambridge K."/>
            <person name="Leongamornlert D."/>
            <person name="McGuire S."/>
            <person name="Gilderthorp R."/>
            <person name="Griffiths C."/>
            <person name="Manthravadi D."/>
            <person name="Nichol S."/>
            <person name="Barker G."/>
            <person name="Whitehead S."/>
            <person name="Kay M."/>
            <person name="Brown J."/>
            <person name="Murnane C."/>
            <person name="Gray E."/>
            <person name="Humphries M."/>
            <person name="Sycamore N."/>
            <person name="Barker D."/>
            <person name="Saunders D."/>
            <person name="Wallis J."/>
            <person name="Babbage A."/>
            <person name="Hammond S."/>
            <person name="Mashreghi-Mohammadi M."/>
            <person name="Barr L."/>
            <person name="Martin S."/>
            <person name="Wray P."/>
            <person name="Ellington A."/>
            <person name="Matthews N."/>
            <person name="Ellwood M."/>
            <person name="Woodmansey R."/>
            <person name="Clark G."/>
            <person name="Cooper J."/>
            <person name="Tromans A."/>
            <person name="Grafham D."/>
            <person name="Skuce C."/>
            <person name="Pandian R."/>
            <person name="Andrews R."/>
            <person name="Harrison E."/>
            <person name="Kimberley A."/>
            <person name="Garnett J."/>
            <person name="Fosker N."/>
            <person name="Hall R."/>
            <person name="Garner P."/>
            <person name="Kelly D."/>
            <person name="Bird C."/>
            <person name="Palmer S."/>
            <person name="Gehring I."/>
            <person name="Berger A."/>
            <person name="Dooley C.M."/>
            <person name="Ersan-Urun Z."/>
            <person name="Eser C."/>
            <person name="Geiger H."/>
            <person name="Geisler M."/>
            <person name="Karotki L."/>
            <person name="Kirn A."/>
            <person name="Konantz J."/>
            <person name="Konantz M."/>
            <person name="Oberlander M."/>
            <person name="Rudolph-Geiger S."/>
            <person name="Teucke M."/>
            <person name="Lanz C."/>
            <person name="Raddatz G."/>
            <person name="Osoegawa K."/>
            <person name="Zhu B."/>
            <person name="Rapp A."/>
            <person name="Widaa S."/>
            <person name="Langford C."/>
            <person name="Yang F."/>
            <person name="Schuster S.C."/>
            <person name="Carter N.P."/>
            <person name="Harrow J."/>
            <person name="Ning Z."/>
            <person name="Herrero J."/>
            <person name="Searle S.M."/>
            <person name="Enright A."/>
            <person name="Geisler R."/>
            <person name="Plasterk R.H."/>
            <person name="Lee C."/>
            <person name="Westerfield M."/>
            <person name="de Jong P.J."/>
            <person name="Zon L.I."/>
            <person name="Postlethwait J.H."/>
            <person name="Nusslein-Volhard C."/>
            <person name="Hubbard T.J."/>
            <person name="Roest Crollius H."/>
            <person name="Rogers J."/>
            <person name="Stemple D.L."/>
        </authorList>
    </citation>
    <scope>NUCLEOTIDE SEQUENCE [LARGE SCALE GENOMIC DNA]</scope>
    <source>
        <strain evidence="9">Tuebingen</strain>
    </source>
</reference>
<reference evidence="8" key="2">
    <citation type="journal article" date="2020" name="Sci. Adv.">
        <title>The NEMP family supports metazoan fertility and nuclear envelope stiffness.</title>
        <authorList>
            <person name="Tsatskis Y."/>
            <person name="Rosenfeld R."/>
            <person name="Pearson J.D."/>
            <person name="Boswell C."/>
            <person name="Qu Y."/>
            <person name="Kim K."/>
            <person name="Fabian L."/>
            <person name="Mohammad A."/>
            <person name="Wang X."/>
            <person name="Robson M.I."/>
            <person name="Krchma K."/>
            <person name="Wu J."/>
            <person name="Goncalves J."/>
            <person name="Hodzic D."/>
            <person name="Wu S."/>
            <person name="Potter D."/>
            <person name="Pelletier L."/>
            <person name="Dunham W.H."/>
            <person name="Gingras A.C."/>
            <person name="Sun Y."/>
            <person name="Meng J."/>
            <person name="Godt D."/>
            <person name="Schedl T."/>
            <person name="Ciruna B."/>
            <person name="Choi K."/>
            <person name="Perry J.R.B."/>
            <person name="Bremner R."/>
            <person name="Schirmer E.C."/>
            <person name="Brill J.A."/>
            <person name="Jurisicova A."/>
            <person name="McNeill H."/>
        </authorList>
    </citation>
    <scope>FUNCTION</scope>
    <scope>DISRUPTION PHENOTYPE</scope>
</reference>
<dbReference type="EMBL" id="BX927210">
    <property type="status" value="NOT_ANNOTATED_CDS"/>
    <property type="molecule type" value="Genomic_DNA"/>
</dbReference>
<dbReference type="RefSeq" id="NP_001303660.1">
    <property type="nucleotide sequence ID" value="NM_001316731.1"/>
</dbReference>
<dbReference type="FunCoup" id="E7FE40">
    <property type="interactions" value="1253"/>
</dbReference>
<dbReference type="STRING" id="7955.ENSDARP00000083040"/>
<dbReference type="PaxDb" id="7955-ENSDARP00000083040"/>
<dbReference type="PeptideAtlas" id="E7FE40"/>
<dbReference type="Ensembl" id="ENSDART00000088607">
    <property type="protein sequence ID" value="ENSDARP00000083040"/>
    <property type="gene ID" value="ENSDARG00000073899"/>
</dbReference>
<dbReference type="GeneID" id="555733"/>
<dbReference type="KEGG" id="dre:555733"/>
<dbReference type="AGR" id="ZFIN:ZDB-GENE-090313-182"/>
<dbReference type="CTD" id="23306"/>
<dbReference type="ZFIN" id="ZDB-GENE-090313-182">
    <property type="gene designation" value="nemp1"/>
</dbReference>
<dbReference type="eggNOG" id="KOG3817">
    <property type="taxonomic scope" value="Eukaryota"/>
</dbReference>
<dbReference type="HOGENOM" id="CLU_025225_0_0_1"/>
<dbReference type="InParanoid" id="E7FE40"/>
<dbReference type="OMA" id="MAGCMKM"/>
<dbReference type="OrthoDB" id="509138at2759"/>
<dbReference type="PhylomeDB" id="E7FE40"/>
<dbReference type="TreeFam" id="TF314831"/>
<dbReference type="PRO" id="PR:E7FE40"/>
<dbReference type="Proteomes" id="UP000000437">
    <property type="component" value="Chromosome 23"/>
</dbReference>
<dbReference type="Bgee" id="ENSDARG00000073899">
    <property type="expression patterns" value="Expressed in mature ovarian follicle and 20 other cell types or tissues"/>
</dbReference>
<dbReference type="GO" id="GO:0005635">
    <property type="term" value="C:nuclear envelope"/>
    <property type="evidence" value="ECO:0000250"/>
    <property type="project" value="UniProtKB"/>
</dbReference>
<dbReference type="GO" id="GO:0005637">
    <property type="term" value="C:nuclear inner membrane"/>
    <property type="evidence" value="ECO:0007669"/>
    <property type="project" value="UniProtKB-SubCell"/>
</dbReference>
<dbReference type="GO" id="GO:0043131">
    <property type="term" value="P:erythrocyte enucleation"/>
    <property type="evidence" value="ECO:0000250"/>
    <property type="project" value="UniProtKB"/>
</dbReference>
<dbReference type="GO" id="GO:0043249">
    <property type="term" value="P:erythrocyte maturation"/>
    <property type="evidence" value="ECO:0000250"/>
    <property type="project" value="UniProtKB"/>
</dbReference>
<dbReference type="GO" id="GO:0001556">
    <property type="term" value="P:oocyte maturation"/>
    <property type="evidence" value="ECO:0000315"/>
    <property type="project" value="ZFIN"/>
</dbReference>
<dbReference type="InterPro" id="IPR019358">
    <property type="entry name" value="NEMP_fam"/>
</dbReference>
<dbReference type="PANTHER" id="PTHR13598">
    <property type="entry name" value="AT07567P-RELATED"/>
    <property type="match status" value="1"/>
</dbReference>
<dbReference type="PANTHER" id="PTHR13598:SF4">
    <property type="entry name" value="NUCLEAR ENVELOPE INTEGRAL MEMBRANE PROTEIN 1"/>
    <property type="match status" value="1"/>
</dbReference>
<dbReference type="Pfam" id="PF10225">
    <property type="entry name" value="NEMP"/>
    <property type="match status" value="1"/>
</dbReference>
<evidence type="ECO:0000250" key="1">
    <source>
        <dbReference type="UniProtKB" id="B9X187"/>
    </source>
</evidence>
<evidence type="ECO:0000250" key="2">
    <source>
        <dbReference type="UniProtKB" id="O14524"/>
    </source>
</evidence>
<evidence type="ECO:0000250" key="3">
    <source>
        <dbReference type="UniProtKB" id="Q6ZQE4"/>
    </source>
</evidence>
<evidence type="ECO:0000255" key="4"/>
<evidence type="ECO:0000255" key="5">
    <source>
        <dbReference type="PROSITE-ProRule" id="PRU00498"/>
    </source>
</evidence>
<evidence type="ECO:0000256" key="6">
    <source>
        <dbReference type="SAM" id="MobiDB-lite"/>
    </source>
</evidence>
<evidence type="ECO:0000269" key="7">
    <source>
    </source>
</evidence>
<evidence type="ECO:0000305" key="8"/>
<evidence type="ECO:0000312" key="9">
    <source>
        <dbReference type="Proteomes" id="UP000000437"/>
    </source>
</evidence>
<evidence type="ECO:0000312" key="10">
    <source>
        <dbReference type="ZFIN" id="ZDB-GENE-090313-182"/>
    </source>
</evidence>
<gene>
    <name evidence="10" type="primary">nemp1</name>
</gene>
<sequence>MAGFMKYKSVSTTIETVRLKLILTAVLFLFPFSQTSGASRPIIEIKDGQEIKVQAAQHFCYNNTIIPGWRETWTRIQVRVWSTTKLKVTVVNDEQDLKELEHFSIWKLVQYFVREQTNETTISVSLFNNKTCFRVDPSESRTLYTVQPSRHFDIYLFLVFLAGVLLFFYADVLSRSQVFHYSAGMSTGMIASLLILIFIVYRFLPKKSPFYMLVVGGWSFSLYIIQLVFRNLQVILTDHWHLAIGYVFVVGFISFAVCYRYGPLVEERSINILSWALQIFGLLLVYAGIQVQQVAFAIMIAAFCSKNLEYPFNTAFMLYHKLKPKKLEPRRLLTEEEFQRQSEVETQKALEELRKYCGSPDFNTWKTVSRLQSPKRFADFIEGSPHLLSNEVSVHMQEYGLGGSFFEDELFSTDEEDKEEEEDGWETEDDIKPEVTSPRMNNTRGK</sequence>
<organism evidence="9">
    <name type="scientific">Danio rerio</name>
    <name type="common">Zebrafish</name>
    <name type="synonym">Brachydanio rerio</name>
    <dbReference type="NCBI Taxonomy" id="7955"/>
    <lineage>
        <taxon>Eukaryota</taxon>
        <taxon>Metazoa</taxon>
        <taxon>Chordata</taxon>
        <taxon>Craniata</taxon>
        <taxon>Vertebrata</taxon>
        <taxon>Euteleostomi</taxon>
        <taxon>Actinopterygii</taxon>
        <taxon>Neopterygii</taxon>
        <taxon>Teleostei</taxon>
        <taxon>Ostariophysi</taxon>
        <taxon>Cypriniformes</taxon>
        <taxon>Danionidae</taxon>
        <taxon>Danioninae</taxon>
        <taxon>Danio</taxon>
    </lineage>
</organism>
<feature type="signal peptide" evidence="4">
    <location>
        <begin position="1"/>
        <end position="37"/>
    </location>
</feature>
<feature type="chain" id="PRO_0000456393" description="Nuclear envelope integral membrane protein 1" evidence="4">
    <location>
        <begin position="38"/>
        <end position="446"/>
    </location>
</feature>
<feature type="transmembrane region" description="Helical" evidence="4">
    <location>
        <begin position="154"/>
        <end position="174"/>
    </location>
</feature>
<feature type="transmembrane region" description="Helical" evidence="4">
    <location>
        <begin position="181"/>
        <end position="201"/>
    </location>
</feature>
<feature type="transmembrane region" description="Helical" evidence="4">
    <location>
        <begin position="209"/>
        <end position="229"/>
    </location>
</feature>
<feature type="transmembrane region" description="Helical" evidence="4">
    <location>
        <begin position="239"/>
        <end position="259"/>
    </location>
</feature>
<feature type="transmembrane region" description="Helical" evidence="4">
    <location>
        <begin position="269"/>
        <end position="289"/>
    </location>
</feature>
<feature type="region of interest" description="Disordered" evidence="6">
    <location>
        <begin position="410"/>
        <end position="446"/>
    </location>
</feature>
<feature type="compositionally biased region" description="Acidic residues" evidence="6">
    <location>
        <begin position="410"/>
        <end position="431"/>
    </location>
</feature>
<feature type="glycosylation site" description="N-linked (GlcNAc...) asparagine" evidence="5">
    <location>
        <position position="62"/>
    </location>
</feature>
<feature type="glycosylation site" description="N-linked (GlcNAc...) asparagine" evidence="5">
    <location>
        <position position="118"/>
    </location>
</feature>
<feature type="glycosylation site" description="N-linked (GlcNAc...) asparagine" evidence="5">
    <location>
        <position position="129"/>
    </location>
</feature>
<feature type="glycosylation site" description="N-linked (GlcNAc...) asparagine" evidence="5">
    <location>
        <position position="441"/>
    </location>
</feature>
<comment type="function">
    <text evidence="2 3 7">Contributes to nuclear envelope stiffness in germ cells (By similarity). Involved in male and female fertility (PubMed:32923640). Essential for normal erythropoiesis (By similarity). Required for efficient nuclear envelope opening and enucleation during the late stages of erythroblast maturation (By similarity).</text>
</comment>
<comment type="subcellular location">
    <subcellularLocation>
        <location evidence="3">Nucleus inner membrane</location>
        <topology evidence="4">Multi-pass membrane protein</topology>
        <orientation evidence="1">Nucleoplasmic side</orientation>
    </subcellularLocation>
</comment>
<comment type="disruption phenotype">
    <text evidence="7">No discernible effect on morphology, viability or fecundity (PubMed:32923640). Simultaneous knockout of nemp1 and nemp2 results in viable healthy animals but both females and males have impaired fertility with females laying normal-sized clutches only for the first 3 weeks followed by a marked drop in fertility (PubMed:32923640).</text>
</comment>
<comment type="similarity">
    <text evidence="8">Belongs to the NEMP family.</text>
</comment>
<accession>E7FE40</accession>